<protein>
    <recommendedName>
        <fullName evidence="1">Small ribosomal subunit protein uS5</fullName>
    </recommendedName>
    <alternativeName>
        <fullName evidence="2">30S ribosomal protein S5</fullName>
    </alternativeName>
</protein>
<organism>
    <name type="scientific">Photobacterium profundum (strain SS9)</name>
    <dbReference type="NCBI Taxonomy" id="298386"/>
    <lineage>
        <taxon>Bacteria</taxon>
        <taxon>Pseudomonadati</taxon>
        <taxon>Pseudomonadota</taxon>
        <taxon>Gammaproteobacteria</taxon>
        <taxon>Vibrionales</taxon>
        <taxon>Vibrionaceae</taxon>
        <taxon>Photobacterium</taxon>
    </lineage>
</organism>
<keyword id="KW-1185">Reference proteome</keyword>
<keyword id="KW-0687">Ribonucleoprotein</keyword>
<keyword id="KW-0689">Ribosomal protein</keyword>
<keyword id="KW-0694">RNA-binding</keyword>
<keyword id="KW-0699">rRNA-binding</keyword>
<feature type="chain" id="PRO_0000131568" description="Small ribosomal subunit protein uS5">
    <location>
        <begin position="1"/>
        <end position="165"/>
    </location>
</feature>
<feature type="domain" description="S5 DRBM" evidence="1">
    <location>
        <begin position="10"/>
        <end position="73"/>
    </location>
</feature>
<dbReference type="EMBL" id="CR378663">
    <property type="protein sequence ID" value="CAG18776.1"/>
    <property type="molecule type" value="Genomic_DNA"/>
</dbReference>
<dbReference type="RefSeq" id="WP_011217141.1">
    <property type="nucleotide sequence ID" value="NC_006370.1"/>
</dbReference>
<dbReference type="SMR" id="Q6LV99"/>
<dbReference type="STRING" id="298386.PBPRA0337"/>
<dbReference type="KEGG" id="ppr:PBPRA0337"/>
<dbReference type="eggNOG" id="COG0098">
    <property type="taxonomic scope" value="Bacteria"/>
</dbReference>
<dbReference type="HOGENOM" id="CLU_065898_2_2_6"/>
<dbReference type="Proteomes" id="UP000000593">
    <property type="component" value="Chromosome 1"/>
</dbReference>
<dbReference type="GO" id="GO:0015935">
    <property type="term" value="C:small ribosomal subunit"/>
    <property type="evidence" value="ECO:0007669"/>
    <property type="project" value="InterPro"/>
</dbReference>
<dbReference type="GO" id="GO:0019843">
    <property type="term" value="F:rRNA binding"/>
    <property type="evidence" value="ECO:0007669"/>
    <property type="project" value="UniProtKB-UniRule"/>
</dbReference>
<dbReference type="GO" id="GO:0003735">
    <property type="term" value="F:structural constituent of ribosome"/>
    <property type="evidence" value="ECO:0007669"/>
    <property type="project" value="InterPro"/>
</dbReference>
<dbReference type="GO" id="GO:0006412">
    <property type="term" value="P:translation"/>
    <property type="evidence" value="ECO:0007669"/>
    <property type="project" value="UniProtKB-UniRule"/>
</dbReference>
<dbReference type="FunFam" id="3.30.160.20:FF:000001">
    <property type="entry name" value="30S ribosomal protein S5"/>
    <property type="match status" value="1"/>
</dbReference>
<dbReference type="FunFam" id="3.30.230.10:FF:000002">
    <property type="entry name" value="30S ribosomal protein S5"/>
    <property type="match status" value="1"/>
</dbReference>
<dbReference type="Gene3D" id="3.30.160.20">
    <property type="match status" value="1"/>
</dbReference>
<dbReference type="Gene3D" id="3.30.230.10">
    <property type="match status" value="1"/>
</dbReference>
<dbReference type="HAMAP" id="MF_01307_B">
    <property type="entry name" value="Ribosomal_uS5_B"/>
    <property type="match status" value="1"/>
</dbReference>
<dbReference type="InterPro" id="IPR020568">
    <property type="entry name" value="Ribosomal_Su5_D2-typ_SF"/>
</dbReference>
<dbReference type="InterPro" id="IPR000851">
    <property type="entry name" value="Ribosomal_uS5"/>
</dbReference>
<dbReference type="InterPro" id="IPR005712">
    <property type="entry name" value="Ribosomal_uS5_bac-type"/>
</dbReference>
<dbReference type="InterPro" id="IPR005324">
    <property type="entry name" value="Ribosomal_uS5_C"/>
</dbReference>
<dbReference type="InterPro" id="IPR013810">
    <property type="entry name" value="Ribosomal_uS5_N"/>
</dbReference>
<dbReference type="InterPro" id="IPR018192">
    <property type="entry name" value="Ribosomal_uS5_N_CS"/>
</dbReference>
<dbReference type="InterPro" id="IPR014721">
    <property type="entry name" value="Ribsml_uS5_D2-typ_fold_subgr"/>
</dbReference>
<dbReference type="NCBIfam" id="TIGR01021">
    <property type="entry name" value="rpsE_bact"/>
    <property type="match status" value="1"/>
</dbReference>
<dbReference type="PANTHER" id="PTHR48277">
    <property type="entry name" value="MITOCHONDRIAL RIBOSOMAL PROTEIN S5"/>
    <property type="match status" value="1"/>
</dbReference>
<dbReference type="PANTHER" id="PTHR48277:SF1">
    <property type="entry name" value="MITOCHONDRIAL RIBOSOMAL PROTEIN S5"/>
    <property type="match status" value="1"/>
</dbReference>
<dbReference type="Pfam" id="PF00333">
    <property type="entry name" value="Ribosomal_S5"/>
    <property type="match status" value="1"/>
</dbReference>
<dbReference type="Pfam" id="PF03719">
    <property type="entry name" value="Ribosomal_S5_C"/>
    <property type="match status" value="1"/>
</dbReference>
<dbReference type="SUPFAM" id="SSF54768">
    <property type="entry name" value="dsRNA-binding domain-like"/>
    <property type="match status" value="1"/>
</dbReference>
<dbReference type="SUPFAM" id="SSF54211">
    <property type="entry name" value="Ribosomal protein S5 domain 2-like"/>
    <property type="match status" value="1"/>
</dbReference>
<dbReference type="PROSITE" id="PS00585">
    <property type="entry name" value="RIBOSOMAL_S5"/>
    <property type="match status" value="1"/>
</dbReference>
<dbReference type="PROSITE" id="PS50881">
    <property type="entry name" value="S5_DSRBD"/>
    <property type="match status" value="1"/>
</dbReference>
<name>RS5_PHOPR</name>
<gene>
    <name evidence="1" type="primary">rpsE</name>
    <name type="ordered locus">PBPRA0337</name>
</gene>
<evidence type="ECO:0000255" key="1">
    <source>
        <dbReference type="HAMAP-Rule" id="MF_01307"/>
    </source>
</evidence>
<evidence type="ECO:0000305" key="2"/>
<reference key="1">
    <citation type="journal article" date="2005" name="Science">
        <title>Life at depth: Photobacterium profundum genome sequence and expression analysis.</title>
        <authorList>
            <person name="Vezzi A."/>
            <person name="Campanaro S."/>
            <person name="D'Angelo M."/>
            <person name="Simonato F."/>
            <person name="Vitulo N."/>
            <person name="Lauro F.M."/>
            <person name="Cestaro A."/>
            <person name="Malacrida G."/>
            <person name="Simionati B."/>
            <person name="Cannata N."/>
            <person name="Romualdi C."/>
            <person name="Bartlett D.H."/>
            <person name="Valle G."/>
        </authorList>
    </citation>
    <scope>NUCLEOTIDE SEQUENCE [LARGE SCALE GENOMIC DNA]</scope>
    <source>
        <strain>ATCC BAA-1253 / SS9</strain>
    </source>
</reference>
<sequence>MANEKTQSDLNEKLIAVNRVSKTVKGGRIFSFTALTVVGDGNGRIGFGYGKAREVPAAIQKSMEKARRNMVTVALNEGTLHHAVKGRHTGSKVYMQPASEGTGIIAGGAMRAVLEVAGIRNVLAKAYGSTNPINVVRATIAGLSGMNSPEMIAAKRGLSVKEILG</sequence>
<accession>Q6LV99</accession>
<comment type="function">
    <text evidence="1">With S4 and S12 plays an important role in translational accuracy.</text>
</comment>
<comment type="function">
    <text evidence="1">Located at the back of the 30S subunit body where it stabilizes the conformation of the head with respect to the body.</text>
</comment>
<comment type="subunit">
    <text evidence="1">Part of the 30S ribosomal subunit. Contacts proteins S4 and S8.</text>
</comment>
<comment type="domain">
    <text>The N-terminal domain interacts with the head of the 30S subunit; the C-terminal domain interacts with the body and contacts protein S4. The interaction surface between S4 and S5 is involved in control of translational fidelity.</text>
</comment>
<comment type="similarity">
    <text evidence="1">Belongs to the universal ribosomal protein uS5 family.</text>
</comment>
<proteinExistence type="inferred from homology"/>